<feature type="peptide" id="PRO_0000043469" description="Carcinustatin-14">
    <location>
        <begin position="1"/>
        <end position="5"/>
    </location>
</feature>
<feature type="modified residue" description="Leucine amide" evidence="1">
    <location>
        <position position="5"/>
    </location>
</feature>
<protein>
    <recommendedName>
        <fullName>Carcinustatin-14</fullName>
    </recommendedName>
</protein>
<organism>
    <name type="scientific">Carcinus maenas</name>
    <name type="common">Common shore crab</name>
    <name type="synonym">Green crab</name>
    <dbReference type="NCBI Taxonomy" id="6759"/>
    <lineage>
        <taxon>Eukaryota</taxon>
        <taxon>Metazoa</taxon>
        <taxon>Ecdysozoa</taxon>
        <taxon>Arthropoda</taxon>
        <taxon>Crustacea</taxon>
        <taxon>Multicrustacea</taxon>
        <taxon>Malacostraca</taxon>
        <taxon>Eumalacostraca</taxon>
        <taxon>Eucarida</taxon>
        <taxon>Decapoda</taxon>
        <taxon>Pleocyemata</taxon>
        <taxon>Brachyura</taxon>
        <taxon>Eubrachyura</taxon>
        <taxon>Portunoidea</taxon>
        <taxon>Carcinidae</taxon>
        <taxon>Carcinus</taxon>
    </lineage>
</organism>
<comment type="function">
    <text>May act as a neurotransmitter or neuromodulator.</text>
</comment>
<comment type="subcellular location">
    <subcellularLocation>
        <location>Secreted</location>
    </subcellularLocation>
</comment>
<comment type="similarity">
    <text evidence="2">Belongs to the allatostatin family.</text>
</comment>
<sequence>YSFGL</sequence>
<keyword id="KW-0027">Amidation</keyword>
<keyword id="KW-0903">Direct protein sequencing</keyword>
<keyword id="KW-0527">Neuropeptide</keyword>
<keyword id="KW-0964">Secreted</keyword>
<accession>P81817</accession>
<reference key="1">
    <citation type="journal article" date="1997" name="Eur. J. Biochem.">
        <title>Isolation and identification of multiple neuropeptides of the allatostatin superfamily in the shore crab Carcinus maenas.</title>
        <authorList>
            <person name="Duve H."/>
            <person name="Johnsen A.H."/>
            <person name="Maestro J.-L."/>
            <person name="Scott A.G."/>
            <person name="Jaros P.P."/>
            <person name="Thorpe A."/>
        </authorList>
    </citation>
    <scope>PROTEIN SEQUENCE</scope>
    <scope>AMIDATION AT LEU-5</scope>
    <source>
        <tissue>Cerebral ganglion</tissue>
        <tissue>Thoracic ganglion</tissue>
    </source>
</reference>
<name>ALL14_CARMA</name>
<dbReference type="GO" id="GO:0005576">
    <property type="term" value="C:extracellular region"/>
    <property type="evidence" value="ECO:0007669"/>
    <property type="project" value="UniProtKB-SubCell"/>
</dbReference>
<dbReference type="GO" id="GO:0007218">
    <property type="term" value="P:neuropeptide signaling pathway"/>
    <property type="evidence" value="ECO:0007669"/>
    <property type="project" value="UniProtKB-KW"/>
</dbReference>
<proteinExistence type="evidence at protein level"/>
<evidence type="ECO:0000269" key="1">
    <source>
    </source>
</evidence>
<evidence type="ECO:0000305" key="2"/>